<name>DXR_ACIBS</name>
<accession>B0VMU8</accession>
<dbReference type="EC" id="1.1.1.267" evidence="1"/>
<dbReference type="EMBL" id="CU468230">
    <property type="protein sequence ID" value="CAP01024.1"/>
    <property type="molecule type" value="Genomic_DNA"/>
</dbReference>
<dbReference type="SMR" id="B0VMU8"/>
<dbReference type="KEGG" id="abm:ABSDF1684"/>
<dbReference type="HOGENOM" id="CLU_035714_4_0_6"/>
<dbReference type="UniPathway" id="UPA00056">
    <property type="reaction ID" value="UER00092"/>
</dbReference>
<dbReference type="Proteomes" id="UP000001741">
    <property type="component" value="Chromosome"/>
</dbReference>
<dbReference type="GO" id="GO:0030604">
    <property type="term" value="F:1-deoxy-D-xylulose-5-phosphate reductoisomerase activity"/>
    <property type="evidence" value="ECO:0007669"/>
    <property type="project" value="UniProtKB-UniRule"/>
</dbReference>
<dbReference type="GO" id="GO:0030145">
    <property type="term" value="F:manganese ion binding"/>
    <property type="evidence" value="ECO:0007669"/>
    <property type="project" value="TreeGrafter"/>
</dbReference>
<dbReference type="GO" id="GO:0070402">
    <property type="term" value="F:NADPH binding"/>
    <property type="evidence" value="ECO:0007669"/>
    <property type="project" value="InterPro"/>
</dbReference>
<dbReference type="GO" id="GO:0051484">
    <property type="term" value="P:isopentenyl diphosphate biosynthetic process, methylerythritol 4-phosphate pathway involved in terpenoid biosynthetic process"/>
    <property type="evidence" value="ECO:0007669"/>
    <property type="project" value="TreeGrafter"/>
</dbReference>
<dbReference type="FunFam" id="3.40.50.720:FF:000045">
    <property type="entry name" value="1-deoxy-D-xylulose 5-phosphate reductoisomerase"/>
    <property type="match status" value="1"/>
</dbReference>
<dbReference type="Gene3D" id="1.10.1740.10">
    <property type="match status" value="1"/>
</dbReference>
<dbReference type="Gene3D" id="3.40.50.720">
    <property type="entry name" value="NAD(P)-binding Rossmann-like Domain"/>
    <property type="match status" value="1"/>
</dbReference>
<dbReference type="HAMAP" id="MF_00183">
    <property type="entry name" value="DXP_reductoisom"/>
    <property type="match status" value="1"/>
</dbReference>
<dbReference type="InterPro" id="IPR003821">
    <property type="entry name" value="DXP_reductoisomerase"/>
</dbReference>
<dbReference type="InterPro" id="IPR013644">
    <property type="entry name" value="DXP_reductoisomerase_C"/>
</dbReference>
<dbReference type="InterPro" id="IPR013512">
    <property type="entry name" value="DXP_reductoisomerase_N"/>
</dbReference>
<dbReference type="InterPro" id="IPR026877">
    <property type="entry name" value="DXPR_C"/>
</dbReference>
<dbReference type="InterPro" id="IPR036169">
    <property type="entry name" value="DXPR_C_sf"/>
</dbReference>
<dbReference type="InterPro" id="IPR036291">
    <property type="entry name" value="NAD(P)-bd_dom_sf"/>
</dbReference>
<dbReference type="NCBIfam" id="TIGR00243">
    <property type="entry name" value="Dxr"/>
    <property type="match status" value="1"/>
</dbReference>
<dbReference type="NCBIfam" id="NF003938">
    <property type="entry name" value="PRK05447.1-1"/>
    <property type="match status" value="1"/>
</dbReference>
<dbReference type="NCBIfam" id="NF009114">
    <property type="entry name" value="PRK12464.1"/>
    <property type="match status" value="1"/>
</dbReference>
<dbReference type="PANTHER" id="PTHR30525">
    <property type="entry name" value="1-DEOXY-D-XYLULOSE 5-PHOSPHATE REDUCTOISOMERASE"/>
    <property type="match status" value="1"/>
</dbReference>
<dbReference type="PANTHER" id="PTHR30525:SF0">
    <property type="entry name" value="1-DEOXY-D-XYLULOSE 5-PHOSPHATE REDUCTOISOMERASE, CHLOROPLASTIC"/>
    <property type="match status" value="1"/>
</dbReference>
<dbReference type="Pfam" id="PF08436">
    <property type="entry name" value="DXP_redisom_C"/>
    <property type="match status" value="1"/>
</dbReference>
<dbReference type="Pfam" id="PF02670">
    <property type="entry name" value="DXP_reductoisom"/>
    <property type="match status" value="1"/>
</dbReference>
<dbReference type="Pfam" id="PF13288">
    <property type="entry name" value="DXPR_C"/>
    <property type="match status" value="1"/>
</dbReference>
<dbReference type="PIRSF" id="PIRSF006205">
    <property type="entry name" value="Dxp_reductismrs"/>
    <property type="match status" value="1"/>
</dbReference>
<dbReference type="SUPFAM" id="SSF69055">
    <property type="entry name" value="1-deoxy-D-xylulose-5-phosphate reductoisomerase, C-terminal domain"/>
    <property type="match status" value="1"/>
</dbReference>
<dbReference type="SUPFAM" id="SSF55347">
    <property type="entry name" value="Glyceraldehyde-3-phosphate dehydrogenase-like, C-terminal domain"/>
    <property type="match status" value="1"/>
</dbReference>
<dbReference type="SUPFAM" id="SSF51735">
    <property type="entry name" value="NAD(P)-binding Rossmann-fold domains"/>
    <property type="match status" value="1"/>
</dbReference>
<reference key="1">
    <citation type="journal article" date="2008" name="PLoS ONE">
        <title>Comparative analysis of Acinetobacters: three genomes for three lifestyles.</title>
        <authorList>
            <person name="Vallenet D."/>
            <person name="Nordmann P."/>
            <person name="Barbe V."/>
            <person name="Poirel L."/>
            <person name="Mangenot S."/>
            <person name="Bataille E."/>
            <person name="Dossat C."/>
            <person name="Gas S."/>
            <person name="Kreimeyer A."/>
            <person name="Lenoble P."/>
            <person name="Oztas S."/>
            <person name="Poulain J."/>
            <person name="Segurens B."/>
            <person name="Robert C."/>
            <person name="Abergel C."/>
            <person name="Claverie J.-M."/>
            <person name="Raoult D."/>
            <person name="Medigue C."/>
            <person name="Weissenbach J."/>
            <person name="Cruveiller S."/>
        </authorList>
    </citation>
    <scope>NUCLEOTIDE SEQUENCE [LARGE SCALE GENOMIC DNA]</scope>
    <source>
        <strain>SDF</strain>
    </source>
</reference>
<sequence length="399" mass="43453">MTQSVCILGVTGSIGQSTLKILGQHPDKYSVFAVSAHSRISELVEICKQFRPKVVVVPEQKIAELKTLFAQQNISAIDVLAGQEGLVDIASHTDVDIVMAAIVGAAGLLPTLAAVKAGKRVLLANKEALVMSGEIMMQAARDHQALLLPVDSEHNAIFQSLPHNYLQADRTGQPQLGVSKILLTASGGPFLNHSLEQLVHVTPQKACKHPNWSMGQKISVDSATLMNKGLELIEACHLFSISEHFVTVVVHPQSIIHSMVQYVDGSTLAQMGNPDMCTPIAHALAWPERLQTNVPALDLFEYSQLNFQAPDTQKFPALNLARQAMRAGGLAPTILNAANEIAVEAFLMERIGFTSIPQVVEHTLEKLENTAAESIECILDKDKVARSVAQQYIKYWRLK</sequence>
<keyword id="KW-0414">Isoprene biosynthesis</keyword>
<keyword id="KW-0464">Manganese</keyword>
<keyword id="KW-0479">Metal-binding</keyword>
<keyword id="KW-0521">NADP</keyword>
<keyword id="KW-0560">Oxidoreductase</keyword>
<organism>
    <name type="scientific">Acinetobacter baumannii (strain SDF)</name>
    <dbReference type="NCBI Taxonomy" id="509170"/>
    <lineage>
        <taxon>Bacteria</taxon>
        <taxon>Pseudomonadati</taxon>
        <taxon>Pseudomonadota</taxon>
        <taxon>Gammaproteobacteria</taxon>
        <taxon>Moraxellales</taxon>
        <taxon>Moraxellaceae</taxon>
        <taxon>Acinetobacter</taxon>
        <taxon>Acinetobacter calcoaceticus/baumannii complex</taxon>
    </lineage>
</organism>
<comment type="function">
    <text evidence="1">Catalyzes the NADPH-dependent rearrangement and reduction of 1-deoxy-D-xylulose-5-phosphate (DXP) to 2-C-methyl-D-erythritol 4-phosphate (MEP).</text>
</comment>
<comment type="catalytic activity">
    <reaction evidence="1">
        <text>2-C-methyl-D-erythritol 4-phosphate + NADP(+) = 1-deoxy-D-xylulose 5-phosphate + NADPH + H(+)</text>
        <dbReference type="Rhea" id="RHEA:13717"/>
        <dbReference type="ChEBI" id="CHEBI:15378"/>
        <dbReference type="ChEBI" id="CHEBI:57783"/>
        <dbReference type="ChEBI" id="CHEBI:57792"/>
        <dbReference type="ChEBI" id="CHEBI:58262"/>
        <dbReference type="ChEBI" id="CHEBI:58349"/>
        <dbReference type="EC" id="1.1.1.267"/>
    </reaction>
    <physiologicalReaction direction="right-to-left" evidence="1">
        <dbReference type="Rhea" id="RHEA:13719"/>
    </physiologicalReaction>
</comment>
<comment type="cofactor">
    <cofactor evidence="1">
        <name>Mg(2+)</name>
        <dbReference type="ChEBI" id="CHEBI:18420"/>
    </cofactor>
    <cofactor evidence="1">
        <name>Mn(2+)</name>
        <dbReference type="ChEBI" id="CHEBI:29035"/>
    </cofactor>
</comment>
<comment type="pathway">
    <text evidence="1">Isoprenoid biosynthesis; isopentenyl diphosphate biosynthesis via DXP pathway; isopentenyl diphosphate from 1-deoxy-D-xylulose 5-phosphate: step 1/6.</text>
</comment>
<comment type="similarity">
    <text evidence="1">Belongs to the DXR family.</text>
</comment>
<evidence type="ECO:0000255" key="1">
    <source>
        <dbReference type="HAMAP-Rule" id="MF_00183"/>
    </source>
</evidence>
<gene>
    <name evidence="1" type="primary">dxr</name>
    <name type="ordered locus">ABSDF1684</name>
</gene>
<proteinExistence type="inferred from homology"/>
<protein>
    <recommendedName>
        <fullName evidence="1">1-deoxy-D-xylulose 5-phosphate reductoisomerase</fullName>
        <shortName evidence="1">DXP reductoisomerase</shortName>
        <ecNumber evidence="1">1.1.1.267</ecNumber>
    </recommendedName>
    <alternativeName>
        <fullName evidence="1">1-deoxyxylulose-5-phosphate reductoisomerase</fullName>
    </alternativeName>
    <alternativeName>
        <fullName evidence="1">2-C-methyl-D-erythritol 4-phosphate synthase</fullName>
    </alternativeName>
</protein>
<feature type="chain" id="PRO_1000098468" description="1-deoxy-D-xylulose 5-phosphate reductoisomerase">
    <location>
        <begin position="1"/>
        <end position="399"/>
    </location>
</feature>
<feature type="binding site" evidence="1">
    <location>
        <position position="11"/>
    </location>
    <ligand>
        <name>NADPH</name>
        <dbReference type="ChEBI" id="CHEBI:57783"/>
    </ligand>
</feature>
<feature type="binding site" evidence="1">
    <location>
        <position position="12"/>
    </location>
    <ligand>
        <name>NADPH</name>
        <dbReference type="ChEBI" id="CHEBI:57783"/>
    </ligand>
</feature>
<feature type="binding site" evidence="1">
    <location>
        <position position="13"/>
    </location>
    <ligand>
        <name>NADPH</name>
        <dbReference type="ChEBI" id="CHEBI:57783"/>
    </ligand>
</feature>
<feature type="binding site" evidence="1">
    <location>
        <position position="14"/>
    </location>
    <ligand>
        <name>NADPH</name>
        <dbReference type="ChEBI" id="CHEBI:57783"/>
    </ligand>
</feature>
<feature type="binding site" evidence="1">
    <location>
        <position position="125"/>
    </location>
    <ligand>
        <name>NADPH</name>
        <dbReference type="ChEBI" id="CHEBI:57783"/>
    </ligand>
</feature>
<feature type="binding site" evidence="1">
    <location>
        <position position="126"/>
    </location>
    <ligand>
        <name>1-deoxy-D-xylulose 5-phosphate</name>
        <dbReference type="ChEBI" id="CHEBI:57792"/>
    </ligand>
</feature>
<feature type="binding site" evidence="1">
    <location>
        <position position="127"/>
    </location>
    <ligand>
        <name>NADPH</name>
        <dbReference type="ChEBI" id="CHEBI:57783"/>
    </ligand>
</feature>
<feature type="binding site" evidence="1">
    <location>
        <position position="151"/>
    </location>
    <ligand>
        <name>Mn(2+)</name>
        <dbReference type="ChEBI" id="CHEBI:29035"/>
    </ligand>
</feature>
<feature type="binding site" evidence="1">
    <location>
        <position position="152"/>
    </location>
    <ligand>
        <name>1-deoxy-D-xylulose 5-phosphate</name>
        <dbReference type="ChEBI" id="CHEBI:57792"/>
    </ligand>
</feature>
<feature type="binding site" evidence="1">
    <location>
        <position position="153"/>
    </location>
    <ligand>
        <name>1-deoxy-D-xylulose 5-phosphate</name>
        <dbReference type="ChEBI" id="CHEBI:57792"/>
    </ligand>
</feature>
<feature type="binding site" evidence="1">
    <location>
        <position position="153"/>
    </location>
    <ligand>
        <name>Mn(2+)</name>
        <dbReference type="ChEBI" id="CHEBI:29035"/>
    </ligand>
</feature>
<feature type="binding site" evidence="1">
    <location>
        <position position="186"/>
    </location>
    <ligand>
        <name>1-deoxy-D-xylulose 5-phosphate</name>
        <dbReference type="ChEBI" id="CHEBI:57792"/>
    </ligand>
</feature>
<feature type="binding site" evidence="1">
    <location>
        <position position="209"/>
    </location>
    <ligand>
        <name>1-deoxy-D-xylulose 5-phosphate</name>
        <dbReference type="ChEBI" id="CHEBI:57792"/>
    </ligand>
</feature>
<feature type="binding site" evidence="1">
    <location>
        <position position="215"/>
    </location>
    <ligand>
        <name>NADPH</name>
        <dbReference type="ChEBI" id="CHEBI:57783"/>
    </ligand>
</feature>
<feature type="binding site" evidence="1">
    <location>
        <position position="222"/>
    </location>
    <ligand>
        <name>1-deoxy-D-xylulose 5-phosphate</name>
        <dbReference type="ChEBI" id="CHEBI:57792"/>
    </ligand>
</feature>
<feature type="binding site" evidence="1">
    <location>
        <position position="227"/>
    </location>
    <ligand>
        <name>1-deoxy-D-xylulose 5-phosphate</name>
        <dbReference type="ChEBI" id="CHEBI:57792"/>
    </ligand>
</feature>
<feature type="binding site" evidence="1">
    <location>
        <position position="228"/>
    </location>
    <ligand>
        <name>1-deoxy-D-xylulose 5-phosphate</name>
        <dbReference type="ChEBI" id="CHEBI:57792"/>
    </ligand>
</feature>
<feature type="binding site" evidence="1">
    <location>
        <position position="231"/>
    </location>
    <ligand>
        <name>1-deoxy-D-xylulose 5-phosphate</name>
        <dbReference type="ChEBI" id="CHEBI:57792"/>
    </ligand>
</feature>
<feature type="binding site" evidence="1">
    <location>
        <position position="231"/>
    </location>
    <ligand>
        <name>Mn(2+)</name>
        <dbReference type="ChEBI" id="CHEBI:29035"/>
    </ligand>
</feature>